<protein>
    <recommendedName>
        <fullName>Genome polyprotein</fullName>
    </recommendedName>
    <component>
        <recommendedName>
            <fullName>P1 proteinase</fullName>
            <ecNumber evidence="2">3.4.-.-</ecNumber>
        </recommendedName>
        <alternativeName>
            <fullName>N-terminal protein</fullName>
        </alternativeName>
    </component>
    <component>
        <recommendedName>
            <fullName>Helper component proteinase</fullName>
            <shortName>HC-pro</shortName>
            <ecNumber evidence="2">3.4.22.45</ecNumber>
        </recommendedName>
    </component>
    <component>
        <recommendedName>
            <fullName>Protein P3</fullName>
        </recommendedName>
    </component>
    <component>
        <recommendedName>
            <fullName>6 kDa protein 1</fullName>
            <shortName>6K1</shortName>
        </recommendedName>
    </component>
    <component>
        <recommendedName>
            <fullName>Cytoplasmic inclusion protein</fullName>
            <shortName>CI</shortName>
            <ecNumber>3.6.4.-</ecNumber>
        </recommendedName>
    </component>
    <component>
        <recommendedName>
            <fullName>6 kDa protein 2</fullName>
            <shortName>6K2</shortName>
        </recommendedName>
    </component>
    <component>
        <recommendedName>
            <fullName>Viral genome-linked protein</fullName>
        </recommendedName>
        <alternativeName>
            <fullName>VPg</fullName>
        </alternativeName>
    </component>
    <component>
        <recommendedName>
            <fullName>Nuclear inclusion protein A</fullName>
            <shortName>NI-a</shortName>
            <shortName>NIa</shortName>
            <ecNumber>3.4.22.44</ecNumber>
        </recommendedName>
        <alternativeName>
            <fullName>49 kDa proteinase</fullName>
            <shortName>49 kDa-Pro</shortName>
        </alternativeName>
        <alternativeName>
            <fullName>NIa-pro</fullName>
        </alternativeName>
    </component>
    <component>
        <recommendedName>
            <fullName>Nuclear inclusion protein B</fullName>
            <shortName>NI-b</shortName>
            <shortName>NIb</shortName>
            <ecNumber>2.7.7.48</ecNumber>
        </recommendedName>
        <alternativeName>
            <fullName>RNA-directed RNA polymerase</fullName>
        </alternativeName>
    </component>
    <component>
        <recommendedName>
            <fullName>Capsid protein</fullName>
            <shortName>CP</shortName>
        </recommendedName>
        <alternativeName>
            <fullName>Coat protein</fullName>
        </alternativeName>
    </component>
</protein>
<dbReference type="EC" id="3.4.-.-" evidence="2"/>
<dbReference type="EC" id="3.4.22.45" evidence="2"/>
<dbReference type="EC" id="3.6.4.-"/>
<dbReference type="EC" id="3.4.22.44"/>
<dbReference type="EC" id="2.7.7.48"/>
<dbReference type="EMBL" id="X97705">
    <property type="protein sequence ID" value="CAA66281.1"/>
    <property type="molecule type" value="Genomic_RNA"/>
</dbReference>
<dbReference type="RefSeq" id="NP_619667.1">
    <property type="nucleotide sequence ID" value="NC_003605.1"/>
</dbReference>
<dbReference type="GeneID" id="940180"/>
<dbReference type="KEGG" id="vg:940180"/>
<dbReference type="Proteomes" id="UP000008378">
    <property type="component" value="Segment"/>
</dbReference>
<dbReference type="GO" id="GO:0019029">
    <property type="term" value="C:helical viral capsid"/>
    <property type="evidence" value="ECO:0007669"/>
    <property type="project" value="UniProtKB-KW"/>
</dbReference>
<dbReference type="GO" id="GO:0044161">
    <property type="term" value="C:host cell cytoplasmic vesicle"/>
    <property type="evidence" value="ECO:0007669"/>
    <property type="project" value="UniProtKB-SubCell"/>
</dbReference>
<dbReference type="GO" id="GO:0042025">
    <property type="term" value="C:host cell nucleus"/>
    <property type="evidence" value="ECO:0007669"/>
    <property type="project" value="UniProtKB-SubCell"/>
</dbReference>
<dbReference type="GO" id="GO:0005524">
    <property type="term" value="F:ATP binding"/>
    <property type="evidence" value="ECO:0007669"/>
    <property type="project" value="UniProtKB-KW"/>
</dbReference>
<dbReference type="GO" id="GO:0004197">
    <property type="term" value="F:cysteine-type endopeptidase activity"/>
    <property type="evidence" value="ECO:0007669"/>
    <property type="project" value="InterPro"/>
</dbReference>
<dbReference type="GO" id="GO:0004386">
    <property type="term" value="F:helicase activity"/>
    <property type="evidence" value="ECO:0007669"/>
    <property type="project" value="UniProtKB-KW"/>
</dbReference>
<dbReference type="GO" id="GO:0016818">
    <property type="term" value="F:hydrolase activity, acting on acid anhydrides, in phosphorus-containing anhydrides"/>
    <property type="evidence" value="ECO:0007669"/>
    <property type="project" value="InterPro"/>
</dbReference>
<dbReference type="GO" id="GO:0003723">
    <property type="term" value="F:RNA binding"/>
    <property type="evidence" value="ECO:0007669"/>
    <property type="project" value="InterPro"/>
</dbReference>
<dbReference type="GO" id="GO:0003968">
    <property type="term" value="F:RNA-directed RNA polymerase activity"/>
    <property type="evidence" value="ECO:0007669"/>
    <property type="project" value="UniProtKB-KW"/>
</dbReference>
<dbReference type="GO" id="GO:0008236">
    <property type="term" value="F:serine-type peptidase activity"/>
    <property type="evidence" value="ECO:0007669"/>
    <property type="project" value="UniProtKB-KW"/>
</dbReference>
<dbReference type="GO" id="GO:0005198">
    <property type="term" value="F:structural molecule activity"/>
    <property type="evidence" value="ECO:0007669"/>
    <property type="project" value="InterPro"/>
</dbReference>
<dbReference type="GO" id="GO:0006351">
    <property type="term" value="P:DNA-templated transcription"/>
    <property type="evidence" value="ECO:0007669"/>
    <property type="project" value="InterPro"/>
</dbReference>
<dbReference type="GO" id="GO:0006508">
    <property type="term" value="P:proteolysis"/>
    <property type="evidence" value="ECO:0007669"/>
    <property type="project" value="UniProtKB-KW"/>
</dbReference>
<dbReference type="GO" id="GO:0052170">
    <property type="term" value="P:symbiont-mediated suppression of host innate immune response"/>
    <property type="evidence" value="ECO:0007669"/>
    <property type="project" value="UniProtKB-KW"/>
</dbReference>
<dbReference type="GO" id="GO:0039694">
    <property type="term" value="P:viral RNA genome replication"/>
    <property type="evidence" value="ECO:0007669"/>
    <property type="project" value="InterPro"/>
</dbReference>
<dbReference type="GO" id="GO:0075523">
    <property type="term" value="P:viral translational frameshifting"/>
    <property type="evidence" value="ECO:0007669"/>
    <property type="project" value="UniProtKB-KW"/>
</dbReference>
<dbReference type="CDD" id="cd23175">
    <property type="entry name" value="ps-ssRNAv_Potyviridae_RdRp"/>
    <property type="match status" value="1"/>
</dbReference>
<dbReference type="Gene3D" id="3.30.70.270">
    <property type="match status" value="1"/>
</dbReference>
<dbReference type="Gene3D" id="3.90.70.150">
    <property type="entry name" value="Helper component proteinase"/>
    <property type="match status" value="1"/>
</dbReference>
<dbReference type="Gene3D" id="3.40.50.300">
    <property type="entry name" value="P-loop containing nucleotide triphosphate hydrolases"/>
    <property type="match status" value="2"/>
</dbReference>
<dbReference type="Gene3D" id="2.40.10.10">
    <property type="entry name" value="Trypsin-like serine proteases"/>
    <property type="match status" value="2"/>
</dbReference>
<dbReference type="InterPro" id="IPR011545">
    <property type="entry name" value="DEAD/DEAH_box_helicase_dom"/>
</dbReference>
<dbReference type="InterPro" id="IPR043502">
    <property type="entry name" value="DNA/RNA_pol_sf"/>
</dbReference>
<dbReference type="InterPro" id="IPR001456">
    <property type="entry name" value="HC-pro"/>
</dbReference>
<dbReference type="InterPro" id="IPR031159">
    <property type="entry name" value="HC_PRO_CPD_dom"/>
</dbReference>
<dbReference type="InterPro" id="IPR042308">
    <property type="entry name" value="HC_PRO_CPD_sf"/>
</dbReference>
<dbReference type="InterPro" id="IPR014001">
    <property type="entry name" value="Helicase_ATP-bd"/>
</dbReference>
<dbReference type="InterPro" id="IPR001650">
    <property type="entry name" value="Helicase_C-like"/>
</dbReference>
<dbReference type="InterPro" id="IPR027417">
    <property type="entry name" value="P-loop_NTPase"/>
</dbReference>
<dbReference type="InterPro" id="IPR002540">
    <property type="entry name" value="Pept_S30_P1_potyvir"/>
</dbReference>
<dbReference type="InterPro" id="IPR009003">
    <property type="entry name" value="Peptidase_S1_PA"/>
</dbReference>
<dbReference type="InterPro" id="IPR043504">
    <property type="entry name" value="Peptidase_S1_PA_chymotrypsin"/>
</dbReference>
<dbReference type="InterPro" id="IPR001592">
    <property type="entry name" value="Poty_coat"/>
</dbReference>
<dbReference type="InterPro" id="IPR001730">
    <property type="entry name" value="Potyv_NIa-pro_dom"/>
</dbReference>
<dbReference type="InterPro" id="IPR039560">
    <property type="entry name" value="Potyvirid-P3"/>
</dbReference>
<dbReference type="InterPro" id="IPR013648">
    <property type="entry name" value="PP_Potyviridae"/>
</dbReference>
<dbReference type="InterPro" id="IPR043128">
    <property type="entry name" value="Rev_trsase/Diguanyl_cyclase"/>
</dbReference>
<dbReference type="InterPro" id="IPR001205">
    <property type="entry name" value="RNA-dir_pol_C"/>
</dbReference>
<dbReference type="InterPro" id="IPR007094">
    <property type="entry name" value="RNA-dir_pol_PSvirus"/>
</dbReference>
<dbReference type="PANTHER" id="PTHR43519">
    <property type="entry name" value="ATP-DEPENDENT RNA HELICASE HRPB"/>
    <property type="match status" value="1"/>
</dbReference>
<dbReference type="PANTHER" id="PTHR43519:SF1">
    <property type="entry name" value="ATP-DEPENDENT RNA HELICASE HRPB"/>
    <property type="match status" value="1"/>
</dbReference>
<dbReference type="Pfam" id="PF00270">
    <property type="entry name" value="DEAD"/>
    <property type="match status" value="1"/>
</dbReference>
<dbReference type="Pfam" id="PF00271">
    <property type="entry name" value="Helicase_C"/>
    <property type="match status" value="1"/>
</dbReference>
<dbReference type="Pfam" id="PF00863">
    <property type="entry name" value="Peptidase_C4"/>
    <property type="match status" value="1"/>
</dbReference>
<dbReference type="Pfam" id="PF00851">
    <property type="entry name" value="Peptidase_C6"/>
    <property type="match status" value="1"/>
</dbReference>
<dbReference type="Pfam" id="PF01577">
    <property type="entry name" value="Peptidase_S30"/>
    <property type="match status" value="1"/>
</dbReference>
<dbReference type="Pfam" id="PF00767">
    <property type="entry name" value="Poty_coat"/>
    <property type="match status" value="1"/>
</dbReference>
<dbReference type="Pfam" id="PF08440">
    <property type="entry name" value="Poty_PP"/>
    <property type="match status" value="1"/>
</dbReference>
<dbReference type="Pfam" id="PF13608">
    <property type="entry name" value="Potyvirid-P3"/>
    <property type="match status" value="1"/>
</dbReference>
<dbReference type="Pfam" id="PF00680">
    <property type="entry name" value="RdRP_1"/>
    <property type="match status" value="1"/>
</dbReference>
<dbReference type="PRINTS" id="PR00966">
    <property type="entry name" value="NIAPOTYPTASE"/>
</dbReference>
<dbReference type="SMART" id="SM00487">
    <property type="entry name" value="DEXDc"/>
    <property type="match status" value="1"/>
</dbReference>
<dbReference type="SMART" id="SM00490">
    <property type="entry name" value="HELICc"/>
    <property type="match status" value="1"/>
</dbReference>
<dbReference type="SUPFAM" id="SSF56672">
    <property type="entry name" value="DNA/RNA polymerases"/>
    <property type="match status" value="1"/>
</dbReference>
<dbReference type="SUPFAM" id="SSF52540">
    <property type="entry name" value="P-loop containing nucleoside triphosphate hydrolases"/>
    <property type="match status" value="2"/>
</dbReference>
<dbReference type="SUPFAM" id="SSF50494">
    <property type="entry name" value="Trypsin-like serine proteases"/>
    <property type="match status" value="1"/>
</dbReference>
<dbReference type="PROSITE" id="PS51744">
    <property type="entry name" value="HC_PRO_CPD"/>
    <property type="match status" value="1"/>
</dbReference>
<dbReference type="PROSITE" id="PS51192">
    <property type="entry name" value="HELICASE_ATP_BIND_1"/>
    <property type="match status" value="1"/>
</dbReference>
<dbReference type="PROSITE" id="PS51194">
    <property type="entry name" value="HELICASE_CTER"/>
    <property type="match status" value="1"/>
</dbReference>
<dbReference type="PROSITE" id="PS51436">
    <property type="entry name" value="POTYVIRUS_NIA_PRO"/>
    <property type="match status" value="1"/>
</dbReference>
<dbReference type="PROSITE" id="PS51871">
    <property type="entry name" value="PV_P1_PRO"/>
    <property type="match status" value="1"/>
</dbReference>
<dbReference type="PROSITE" id="PS50507">
    <property type="entry name" value="RDRP_SSRNA_POS"/>
    <property type="match status" value="1"/>
</dbReference>
<reference key="1">
    <citation type="journal article" date="1997" name="Virus Res.">
        <title>Comparison of the complete nucleotide sequences of two isolates of lettuce mosaic virus differing in their biological properties.</title>
        <authorList>
            <person name="Revers F."/>
            <person name="Yang S.J."/>
            <person name="Walter J."/>
            <person name="Souche S."/>
            <person name="Lot H."/>
            <person name="Le Gall O."/>
            <person name="Candresse T."/>
            <person name="Dunez J."/>
        </authorList>
    </citation>
    <scope>NUCLEOTIDE SEQUENCE [GENOMIC RNA]</scope>
</reference>
<reference key="2">
    <citation type="journal article" date="2001" name="Virus Res.">
        <title>Potyvirus proteins: a wealth of functions.</title>
        <authorList>
            <person name="Urcuqui-Inchima S."/>
            <person name="Haenni A.L."/>
            <person name="Bernardi F."/>
        </authorList>
    </citation>
    <scope>REVIEW</scope>
</reference>
<organism>
    <name type="scientific">Lettuce mosaic virus (strain E)</name>
    <name type="common">LMV</name>
    <dbReference type="NCBI Taxonomy" id="117131"/>
    <lineage>
        <taxon>Viruses</taxon>
        <taxon>Riboviria</taxon>
        <taxon>Orthornavirae</taxon>
        <taxon>Pisuviricota</taxon>
        <taxon>Stelpaviricetes</taxon>
        <taxon>Patatavirales</taxon>
        <taxon>Potyviridae</taxon>
        <taxon>Potyvirus</taxon>
        <taxon>Potyvirus lactucae</taxon>
        <taxon>Lettuce mosaic virus</taxon>
    </lineage>
</organism>
<keyword id="KW-0067">ATP-binding</keyword>
<keyword id="KW-0167">Capsid protein</keyword>
<keyword id="KW-0191">Covalent protein-RNA linkage</keyword>
<keyword id="KW-1139">Helical capsid protein</keyword>
<keyword id="KW-0347">Helicase</keyword>
<keyword id="KW-1036">Host cytoplasmic vesicle</keyword>
<keyword id="KW-1048">Host nucleus</keyword>
<keyword id="KW-0945">Host-virus interaction</keyword>
<keyword id="KW-0378">Hydrolase</keyword>
<keyword id="KW-1090">Inhibition of host innate immune response by virus</keyword>
<keyword id="KW-0547">Nucleotide-binding</keyword>
<keyword id="KW-0548">Nucleotidyltransferase</keyword>
<keyword id="KW-0597">Phosphoprotein</keyword>
<keyword id="KW-0645">Protease</keyword>
<keyword id="KW-0688">Ribosomal frameshifting</keyword>
<keyword id="KW-0696">RNA-directed RNA polymerase</keyword>
<keyword id="KW-0720">Serine protease</keyword>
<keyword id="KW-0941">Suppressor of RNA silencing</keyword>
<keyword id="KW-0788">Thiol protease</keyword>
<keyword id="KW-0808">Transferase</keyword>
<keyword id="KW-0899">Viral immunoevasion</keyword>
<keyword id="KW-0693">Viral RNA replication</keyword>
<keyword id="KW-0946">Virion</keyword>
<sequence length="3255" mass="367624">MATLDNCTQVHHMFAYNREHGTNYTRNHFRRYLAAQRIGFYYDWDDDVYECPTCEAIYHSLDEIKNWHECDPPAFDLNDFITDARLKSAPVPDLGPVIVETPKVEEKQELNFFAATPAPEVLQWKCRGLQFGSFTELETSEPVVSAPKPNCEEPARTIAKPEEPVEQETCGDGKRLLQAQMEVDKAEQDLAFAYLSASLKPRLEGRTTATIARRRDGCLVYKTKPSWSQRKGTKKILKVDTLACKNPYIPAVVDKISIAGGSSASVMHEQQKPKILHTTPSRKVATHYKRTVMNQQTLTALINQVGTIILNAEKEFEVVGCRKQKVTGKGTRHNGVRLVKLKTAHEEGHRRKVDIRIPNGLRSIVTRISARGGWHKTWTDSELSPGSSGYVLNSSKIIGEFGLRRHSIFVVRGRVYGKIIDSQSKVTHTLTHRMVQYSDVARNFWNGYSTCFMHNTPKDILHTCTSDFDVKDCGTVAALLTQTLFQFGKITCGKCAIEYKNLTRDELATRVNKEIDGTIISIQTQHPRFVHVLNFLRLIKQVLNAKNGNFGAFQETERIIGDRMDAPFSHVNKLNAIVIKGNQATSDEMAQASNHVLEIARYFKNRTENIQKGSLKSFRNKISGKAHLNPSLMCDNQLDKNGGFEWGQRSYHAKRFFDGYFETIDPSDGYSKYTIRRNPNGHRKLAIGNLIVSTNFESHRRSMVGEPIEDPGLTNQCVSKEGGAFIYPCCCVTDEYGKPTLSEIKMPTKHHLVLGNAGDPKYVDLPKEAEGKMFVAKDGYCYINIFLAMLVDVPEDQAKDFTKMAREIAVKQLGEWPSMMDVATACNILATFHPDTRRSELPRILVDHATKTFHVIDSYGSITTGYHILKANTVTQLVKFAHESLESEMQHYRVGGEPDKAPRKPAGNVPTLGISDLKNLGVESENEEHSIRPNLQRLIKAIYRPRMMRSLLTEEPYLLILSIVSPGVLMALYNSGSLERTMHEFLQTDQRLSATAQILKHLAKKVSLAKTLTIQNAILEGGAGSLNEILDAPAGRSLSYRLAKQTVEVMMARSDMDKELVDVGFSVLRDQKNELIEKSYLMDLEDSWRALPLCGKLSAMRVSRRWRDTSTPEAIPTGAADLKGRYSISVGSVSKSAILHLKGICSGAVKRVKDKWVGVQVQGVKWLAKSVHYMIPELTNILNVGTLLLTLISLGVRFRSLTGQFKEMKYKETLAREEELRKRIRTYNSTYYEIHGKHADAKQITKFITHHDPKLLEVVEFYEGPEEEEVEHQAKREDQANLERIIAFTALVMMMFDSERSDCVYRSLSKLKSLVSTCDDDVRHQSVDEIIDLFDEKKETIDFEIEGKELYSSRVVDSTFSKWWDNQLVRGNTMAHYRTEGHFMTFTRETAASVAAEIAHNEYRDILLQGGVGSGKSTGLPFHLHKKGGVLLIEPTRPLAQNVYKQLGSNPFHLSPNLRMRGACKFGSSQVTVATSGYALHFIANNAQSLKMFDFIIFDECHVLDASAMAFRCLLQEFEYQGKIIKVSATPPGRKLDFKPMHMVDITTENELSIQQFVQGQGTGVNCDATKKGDNILVYVSSYNEVDMLSKMLNDKGYKVTKVDGRTMKLGSVEVETVGTPQRKHFVVATNIIENGVTLDVDVVVDFGQKVVPILDSEHRMIRYTKKSITYGERIQRVGRVGRNKAGSAIRIGSTEMGTEEIPASIATEAAFLCFTYGLPVMTSNVSTSVLGNCTVRQARTMQKFELSPFFMVDLVHHDGTVHPAINSLLRQFKLKESDTKLSTLAIPNAVTTFWKSAREYNSLGARTTIDDAAKIPFMIKDVPEHLQEKLWETIQQYKGDAGFGRCTSANACKIAYTLSVSPFMIPATINKIDALMAEERQKLEYFQTVTANTCTISNFSISSLGDMIRSRYSTNHSRENLQKLQTVRDTIINFECQAGTSDGGTFDMETAQKLAEEYGCIDVIYHQSKGALSKRLGLKGRWNQSLICKDLLIFCGVAIGGTWMMFQSFKDGMADVIRHQGKGKRQRQKLRYRQARDNKMGIEVYGDDATMEHYFGAAYTEKGKKSGKTKGMGTKNRRFVNMYGYNPEDYSFIRFLDPLTGKTMDEQVFTDISLVQDAFGKERLKLLSEGEIESEHMRNGIRAYLVKNLTTAALEIDMTPHNSCQLGTKTNNIAGFVDREYELRQTGEARVVAPALIPKDNPITDEDIPVKHESKTLFRGLRDYNPIASAICLLTNESDGMKETMYGIGFGNTIITNQHLFRRNNGVLRVQSRHGEYVLPNTTQLKVLPCEGRDIMVIILTPDFPPFPQKLKFRPPIKGEKICLVGSLFQDKSITSTVSETSVTTPVDNSFLWKHWITTKDGHCGLPLVSSNDGYIVGIHSATSSRQTQNYHAAMPEDFHQTHLIDPVSKSWVKHWKYNPDNMVWGGINLINSTPREPFKINKLVTDLFGDAVQFQSKQDEWFASQLKGNLKAVGKSTSQLVTKHTVKGKCMMFELYLQTHEEEKEFFKPLMGAYQKSRLNREAFTKDIMKYSTPITVGIVDCDTFLKAEKGVIKRLEKLGFSGCEYVTDEEAIFQALNMKAAVGALYSGKKRDYFESYGPEEKENILRESCKRLYTGKFGVWNGSLKSELRPMEKVMANKTRVFTAAPLDTLLAGKVCVDDFNNYFYSKNIEAPWTVGMTKFYGGWNELLTKLPDGWVYCDADGSQFDSSLSPFLINSVLRIRLKFMEDWDLGEQMLKNLYTEIVYTAILTPDSTIVKKFKGNNSGQPSTVVDNTLMVVLAMTYTLHKLGFEDEEQDSMCKYFVNGDDLIIAIKPEYESLLDQFQHCFKSLGLNYDFNSRTRKREELWFMSHCGIKKDGIFIPKLEPERIVSILEWDRSDQPVHRLEAICAAMIESWGYDKLTHEIRKFYKWCLDEAPYADLAKAGKAPYIAECALKRLYTSKEASEAELEKYMEAIRSLVNDEDDDDMDEVYHQVDTKLDAGQGSKNDDKQKSSADSKDNVITEKGSGSGQVRKDDDINAGLHGKHTIPRTKAITQKMKLPMIRGKVALNLDHLLEYEPNQRDISNTRATQKQYESWYDGVKNDYDVDDNGMQLILNGLMVWCIENGTSPNINGTWVMMDSEEQVEYALKPIIEHAKPTFRQIMAHFSDAAEAYIEMRNKKKPYMPRYGRLRGLNDMGLARYAFDFYETTSATPNRAREAHNQMKAAALVGTQNRLFGMDGGGSTQEENTERHTAADVNQNMHTLLGVRGLH</sequence>
<comment type="function">
    <molecule>Helper component proteinase</molecule>
    <text evidence="2">Required for aphid transmission and also has proteolytic activity. Only cleaves a Gly-Gly dipeptide at its own C-terminus. Interacts with virions and aphid stylets. Acts as a suppressor of RNA-mediated gene silencing, also known as post-transcriptional gene silencing (PTGS), a mechanism of plant viral defense that limits the accumulation of viral RNAs. May have RNA-binding activity.</text>
</comment>
<comment type="function">
    <molecule>Cytoplasmic inclusion protein</molecule>
    <text>Has helicase activity. It may be involved in replication.</text>
</comment>
<comment type="function">
    <molecule>6 kDa protein 1</molecule>
    <text evidence="4">Indispensable for virus replication.</text>
</comment>
<comment type="function">
    <molecule>6 kDa protein 2</molecule>
    <text evidence="3">Indispensable for virus replication.</text>
</comment>
<comment type="function">
    <molecule>Viral genome-linked protein</molecule>
    <text evidence="5">Mediates the cap-independent, EIF4E-dependent translation of viral genomic RNAs (By similarity). Binds to the cap-binding site of host EIF4E and thus interferes with the host EIF4E-dependent mRNA export and translation (By similarity). VPg-RNA directly binds EIF4E and is a template for transcription (By similarity). Also forms trimeric complexes with EIF4E-EIF4G, which are templates for translation (By similarity).</text>
</comment>
<comment type="function">
    <molecule>Nuclear inclusion protein A</molecule>
    <text evidence="2">Has RNA-binding and proteolytic activities.</text>
</comment>
<comment type="function">
    <molecule>Nuclear inclusion protein B</molecule>
    <text>An RNA-dependent RNA polymerase that plays an essential role in the virus replication.</text>
</comment>
<comment type="function">
    <molecule>Capsid protein</molecule>
    <text evidence="2">Involved in aphid transmission, cell-to-cell and systemis movement, encapsidation of the viral RNA and in the regulation of viral RNA amplification.</text>
</comment>
<comment type="catalytic activity">
    <reaction evidence="8">
        <text>RNA(n) + a ribonucleoside 5'-triphosphate = RNA(n+1) + diphosphate</text>
        <dbReference type="Rhea" id="RHEA:21248"/>
        <dbReference type="Rhea" id="RHEA-COMP:14527"/>
        <dbReference type="Rhea" id="RHEA-COMP:17342"/>
        <dbReference type="ChEBI" id="CHEBI:33019"/>
        <dbReference type="ChEBI" id="CHEBI:61557"/>
        <dbReference type="ChEBI" id="CHEBI:140395"/>
        <dbReference type="EC" id="2.7.7.48"/>
    </reaction>
</comment>
<comment type="catalytic activity">
    <reaction evidence="2">
        <text>Hydrolyzes glutaminyl bonds, and activity is further restricted by preferences for the amino acids in P6 - P1' that vary with the species of potyvirus, e.g. Glu-Xaa-Xaa-Tyr-Xaa-Gln-|-(Ser or Gly) for the enzyme from tobacco etch virus. The natural substrate is the viral polyprotein, but other proteins and oligopeptides containing the appropriate consensus sequence are also cleaved.</text>
        <dbReference type="EC" id="3.4.22.44"/>
    </reaction>
</comment>
<comment type="catalytic activity">
    <reaction evidence="2">
        <text>Hydrolyzes a Gly-|-Gly bond at its own C-terminus, commonly in the sequence -Tyr-Xaa-Val-Gly-|-Gly, in the processing of the potyviral polyprotein.</text>
        <dbReference type="EC" id="3.4.22.45"/>
    </reaction>
</comment>
<comment type="subunit">
    <molecule>Viral genome-linked protein</molecule>
    <text evidence="5">Interacts with host eIF4E protein (via cap-binding region); this interaction mediates the translation of the VPg-viral RNA conjugates (By similarity). Part of a complex that comprises VPg, RNA, host EIF4E and EIF4G; this interaction mediates the translation of the VPg-viral RNA conjugates (By similarity).</text>
</comment>
<comment type="subcellular location">
    <molecule>6 kDa protein 1</molecule>
    <subcellularLocation>
        <location>Host cytoplasmic vesicle</location>
    </subcellularLocation>
    <text evidence="4">Probably colocalizes with 6K2-induced vesicles associated with host chloroplasts.</text>
</comment>
<comment type="subcellular location">
    <molecule>6 kDa protein 2</molecule>
    <subcellularLocation>
        <location evidence="3">Host cytoplasmic vesicle</location>
    </subcellularLocation>
    <text evidence="3">6K-induced vesicles associate with host chloroplasts.</text>
</comment>
<comment type="subcellular location">
    <molecule>Viral genome-linked protein</molecule>
    <subcellularLocation>
        <location evidence="6">Host nucleus</location>
    </subcellularLocation>
    <text evidence="6">Binds to host plant eIF4E proteins in the host nucleus.</text>
</comment>
<comment type="subcellular location">
    <molecule>Capsid protein</molecule>
    <subcellularLocation>
        <location evidence="15">Virion</location>
    </subcellularLocation>
</comment>
<comment type="alternative products">
    <event type="ribosomal frameshifting"/>
    <isoform>
        <id>P89876-1</id>
        <name>Genome polyprotein</name>
        <sequence type="displayed"/>
    </isoform>
    <isoform>
        <id>P0CW79-1</id>
        <name>P3N-PIPO polyprotein</name>
        <sequence type="external"/>
    </isoform>
</comment>
<comment type="domain">
    <molecule>Helper component proteinase</molecule>
    <text>The N-terminus is involved in interaction with stylets. The central part is involved in interaction with virions and the C-terminus is involved in cell-to cell movement of the virus.</text>
</comment>
<comment type="PTM">
    <molecule>Viral genome-linked protein</molecule>
    <text evidence="3">VPg is uridylylated by the polymerase and is covalently attached to the 5'-end of the genomic RNA. This uridylylated form acts as a nucleotide-peptide primer for the polymerase (By similarity).</text>
</comment>
<comment type="PTM">
    <molecule>Genome polyprotein</molecule>
    <text evidence="1">Potyviral RNA is expressed as two polyproteins which undergo post-translational proteolytic processing. Genome polyprotein is processed by NIa-pro, P1 and HC-pro proteinases resulting in the production of at least ten individual proteins. P3N-PIPO polyprotein is cleaved by P1 and HC-pro proteinases resulting in the production of three individual proteins. The P1 proteinase and the HC-pro cleave only their respective C-termini autocatalytically. 6K1 is essential for proper proteolytic separation of P3 from CI (By similarity).</text>
</comment>
<comment type="miscellaneous">
    <molecule>Isoform Genome polyprotein</molecule>
    <text>Produced by conventional translation.</text>
</comment>
<comment type="similarity">
    <text evidence="15">Belongs to the potyviridae genome polyprotein family.</text>
</comment>
<name>POLG_LMVE</name>
<accession>P89876</accession>
<proteinExistence type="inferred from homology"/>
<feature type="chain" id="PRO_0000420000" description="Genome polyprotein">
    <location>
        <begin position="1"/>
        <end position="3255"/>
    </location>
</feature>
<feature type="chain" id="PRO_0000040279" description="P1 proteinase" evidence="7">
    <location>
        <begin position="1"/>
        <end position="437"/>
    </location>
</feature>
<feature type="chain" id="PRO_0000040280" description="Helper component proteinase" evidence="7">
    <location>
        <begin position="438"/>
        <end position="895"/>
    </location>
</feature>
<feature type="chain" id="PRO_0000040281" description="Protein P3" evidence="1">
    <location>
        <begin position="896"/>
        <end position="1273"/>
    </location>
</feature>
<feature type="chain" id="PRO_0000040282" description="6 kDa protein 1" evidence="1">
    <location>
        <begin position="1274"/>
        <end position="1325"/>
    </location>
</feature>
<feature type="chain" id="PRO_0000040283" description="Cytoplasmic inclusion protein" evidence="1">
    <location>
        <begin position="1326"/>
        <end position="1968"/>
    </location>
</feature>
<feature type="chain" id="PRO_0000040284" description="6 kDa protein 2" evidence="1">
    <location>
        <begin position="1969"/>
        <end position="2021"/>
    </location>
</feature>
<feature type="chain" id="PRO_0000040285" description="Viral genome-linked protein" evidence="1">
    <location>
        <begin position="2022"/>
        <end position="2214"/>
    </location>
</feature>
<feature type="chain" id="PRO_0000040286" description="Nuclear inclusion protein A" evidence="1">
    <location>
        <begin position="2215"/>
        <end position="2457"/>
    </location>
</feature>
<feature type="chain" id="PRO_0000040287" description="Nuclear inclusion protein B" evidence="1">
    <location>
        <begin position="2458"/>
        <end position="2977"/>
    </location>
</feature>
<feature type="chain" id="PRO_0000040288" description="Capsid protein" evidence="1">
    <location>
        <begin position="2978"/>
        <end position="3255"/>
    </location>
</feature>
<feature type="domain" description="Peptidase S30" evidence="13">
    <location>
        <begin position="292"/>
        <end position="437"/>
    </location>
</feature>
<feature type="domain" description="Peptidase C6" evidence="12">
    <location>
        <begin position="773"/>
        <end position="895"/>
    </location>
</feature>
<feature type="domain" description="Helicase ATP-binding" evidence="9">
    <location>
        <begin position="1397"/>
        <end position="1549"/>
    </location>
</feature>
<feature type="domain" description="Helicase C-terminal" evidence="10">
    <location>
        <begin position="1568"/>
        <end position="1727"/>
    </location>
</feature>
<feature type="domain" description="Peptidase C4" evidence="11">
    <location>
        <begin position="2215"/>
        <end position="2433"/>
    </location>
</feature>
<feature type="domain" description="RdRp catalytic" evidence="8">
    <location>
        <begin position="2699"/>
        <end position="2823"/>
    </location>
</feature>
<feature type="region of interest" description="Disordered" evidence="14">
    <location>
        <begin position="2980"/>
        <end position="3027"/>
    </location>
</feature>
<feature type="short sequence motif" description="Involved in interaction with stylet and aphid transmission" evidence="1">
    <location>
        <begin position="489"/>
        <end position="492"/>
    </location>
</feature>
<feature type="short sequence motif" description="Involved in virions binding and aphid transmission" evidence="1">
    <location>
        <begin position="747"/>
        <end position="749"/>
    </location>
</feature>
<feature type="short sequence motif" description="DECH box">
    <location>
        <begin position="1499"/>
        <end position="1502"/>
    </location>
</feature>
<feature type="short sequence motif" description="Nuclear localization signal" evidence="7">
    <location>
        <begin position="2062"/>
        <end position="2069"/>
    </location>
</feature>
<feature type="compositionally biased region" description="Basic and acidic residues" evidence="14">
    <location>
        <begin position="2989"/>
        <end position="3005"/>
    </location>
</feature>
<feature type="active site" description="For P1 proteinase activity" evidence="13">
    <location>
        <position position="345"/>
    </location>
</feature>
<feature type="active site" description="For P1 proteinase activity" evidence="13">
    <location>
        <position position="354"/>
    </location>
</feature>
<feature type="active site" description="For P1 proteinase activity" evidence="13">
    <location>
        <position position="388"/>
    </location>
</feature>
<feature type="active site" description="For helper component proteinase activity" evidence="12">
    <location>
        <position position="781"/>
    </location>
</feature>
<feature type="active site" description="For helper component proteinase activity" evidence="12">
    <location>
        <position position="854"/>
    </location>
</feature>
<feature type="active site" description="For nuclear inclusion protein A activity" evidence="11">
    <location>
        <position position="2260"/>
    </location>
</feature>
<feature type="active site" description="For nuclear inclusion protein A activity" evidence="11">
    <location>
        <position position="2295"/>
    </location>
</feature>
<feature type="active site" description="For nuclear inclusion protein A activity" evidence="11">
    <location>
        <position position="2365"/>
    </location>
</feature>
<feature type="binding site" evidence="9">
    <location>
        <begin position="1410"/>
        <end position="1417"/>
    </location>
    <ligand>
        <name>ATP</name>
        <dbReference type="ChEBI" id="CHEBI:30616"/>
    </ligand>
</feature>
<feature type="site" description="Cleavage; by P1 proteinase" evidence="13">
    <location>
        <begin position="437"/>
        <end position="438"/>
    </location>
</feature>
<feature type="site" description="Cleavage; by autolysis" evidence="12">
    <location>
        <begin position="895"/>
        <end position="896"/>
    </location>
</feature>
<feature type="site" description="Cleavage; by NIa-pro" evidence="1">
    <location>
        <begin position="1273"/>
        <end position="1274"/>
    </location>
</feature>
<feature type="site" description="Cleavage; by NIa-pro" evidence="1">
    <location>
        <begin position="1325"/>
        <end position="1326"/>
    </location>
</feature>
<feature type="site" description="Cleavage; by NIa-pro" evidence="1">
    <location>
        <begin position="1968"/>
        <end position="1969"/>
    </location>
</feature>
<feature type="site" description="Cleavage; by NIa-pro" evidence="1">
    <location>
        <begin position="2021"/>
        <end position="2022"/>
    </location>
</feature>
<feature type="site" description="Cleavage; by NIa-pro" evidence="1">
    <location>
        <begin position="2214"/>
        <end position="2215"/>
    </location>
</feature>
<feature type="site" description="Cleavage; by NIa-pro" evidence="1">
    <location>
        <begin position="2457"/>
        <end position="2458"/>
    </location>
</feature>
<feature type="site" description="Cleavage; by NIa-pro" evidence="1">
    <location>
        <begin position="2977"/>
        <end position="2978"/>
    </location>
</feature>
<feature type="modified residue" description="O-(5'-phospho-RNA)-tyrosine" evidence="3">
    <location>
        <position position="2084"/>
    </location>
</feature>
<evidence type="ECO:0000250" key="1"/>
<evidence type="ECO:0000250" key="2">
    <source>
        <dbReference type="UniProtKB" id="P04517"/>
    </source>
</evidence>
<evidence type="ECO:0000250" key="3">
    <source>
        <dbReference type="UniProtKB" id="P09814"/>
    </source>
</evidence>
<evidence type="ECO:0000250" key="4">
    <source>
        <dbReference type="UniProtKB" id="P13529"/>
    </source>
</evidence>
<evidence type="ECO:0000250" key="5">
    <source>
        <dbReference type="UniProtKB" id="P18247"/>
    </source>
</evidence>
<evidence type="ECO:0000250" key="6">
    <source>
        <dbReference type="UniProtKB" id="P21231"/>
    </source>
</evidence>
<evidence type="ECO:0000255" key="7"/>
<evidence type="ECO:0000255" key="8">
    <source>
        <dbReference type="PROSITE-ProRule" id="PRU00539"/>
    </source>
</evidence>
<evidence type="ECO:0000255" key="9">
    <source>
        <dbReference type="PROSITE-ProRule" id="PRU00541"/>
    </source>
</evidence>
<evidence type="ECO:0000255" key="10">
    <source>
        <dbReference type="PROSITE-ProRule" id="PRU00542"/>
    </source>
</evidence>
<evidence type="ECO:0000255" key="11">
    <source>
        <dbReference type="PROSITE-ProRule" id="PRU00766"/>
    </source>
</evidence>
<evidence type="ECO:0000255" key="12">
    <source>
        <dbReference type="PROSITE-ProRule" id="PRU01080"/>
    </source>
</evidence>
<evidence type="ECO:0000255" key="13">
    <source>
        <dbReference type="PROSITE-ProRule" id="PRU01219"/>
    </source>
</evidence>
<evidence type="ECO:0000256" key="14">
    <source>
        <dbReference type="SAM" id="MobiDB-lite"/>
    </source>
</evidence>
<evidence type="ECO:0000305" key="15"/>
<organismHost>
    <name type="scientific">Carthamus tinctorius</name>
    <name type="common">Safflower</name>
    <dbReference type="NCBI Taxonomy" id="4222"/>
</organismHost>
<organismHost>
    <name type="scientific">Cicer arietinum</name>
    <name type="common">Chickpea</name>
    <name type="synonym">Garbanzo</name>
    <dbReference type="NCBI Taxonomy" id="3827"/>
</organismHost>
<organismHost>
    <name type="scientific">Cichorium endivia</name>
    <name type="common">Endive</name>
    <dbReference type="NCBI Taxonomy" id="114280"/>
</organismHost>
<organismHost>
    <name type="scientific">Cichorium intybus</name>
    <name type="common">Chicory</name>
    <dbReference type="NCBI Taxonomy" id="13427"/>
</organismHost>
<organismHost>
    <name type="scientific">Eustoma exaltatum subsp. russellianum</name>
    <name type="common">Bluebells</name>
    <name type="synonym">Eustoma grandiflorum</name>
    <dbReference type="NCBI Taxonomy" id="52518"/>
</organismHost>
<organismHost>
    <name type="scientific">Lactuca</name>
    <dbReference type="NCBI Taxonomy" id="4235"/>
</organismHost>
<organismHost>
    <name type="scientific">Pisum sativum</name>
    <name type="common">Garden pea</name>
    <name type="synonym">Lathyrus oleraceus</name>
    <dbReference type="NCBI Taxonomy" id="3888"/>
</organismHost>
<organismHost>
    <name type="scientific">Spinacia oleracea</name>
    <name type="common">Spinach</name>
    <dbReference type="NCBI Taxonomy" id="3562"/>
</organismHost>